<keyword id="KW-0413">Isomerase</keyword>
<keyword id="KW-1185">Reference proteome</keyword>
<keyword id="KW-0694">RNA-binding</keyword>
<dbReference type="EC" id="5.4.99.-"/>
<dbReference type="EMBL" id="LT708304">
    <property type="protein sequence ID" value="SIU00170.1"/>
    <property type="molecule type" value="Genomic_DNA"/>
</dbReference>
<dbReference type="RefSeq" id="NP_855219.1">
    <property type="nucleotide sequence ID" value="NC_002945.3"/>
</dbReference>
<dbReference type="RefSeq" id="WP_003407723.1">
    <property type="nucleotide sequence ID" value="NC_002945.4"/>
</dbReference>
<dbReference type="SMR" id="P0A5T3"/>
<dbReference type="KEGG" id="mbo:BQ2027_MB1567"/>
<dbReference type="PATRIC" id="fig|233413.5.peg.1713"/>
<dbReference type="Proteomes" id="UP000001419">
    <property type="component" value="Chromosome"/>
</dbReference>
<dbReference type="GO" id="GO:0003723">
    <property type="term" value="F:RNA binding"/>
    <property type="evidence" value="ECO:0007669"/>
    <property type="project" value="UniProtKB-KW"/>
</dbReference>
<dbReference type="GO" id="GO:0120159">
    <property type="term" value="F:rRNA pseudouridine synthase activity"/>
    <property type="evidence" value="ECO:0007669"/>
    <property type="project" value="UniProtKB-ARBA"/>
</dbReference>
<dbReference type="GO" id="GO:0000455">
    <property type="term" value="P:enzyme-directed rRNA pseudouridine synthesis"/>
    <property type="evidence" value="ECO:0007669"/>
    <property type="project" value="TreeGrafter"/>
</dbReference>
<dbReference type="CDD" id="cd02869">
    <property type="entry name" value="PseudoU_synth_RluA_like"/>
    <property type="match status" value="1"/>
</dbReference>
<dbReference type="Gene3D" id="3.30.2350.10">
    <property type="entry name" value="Pseudouridine synthase"/>
    <property type="match status" value="1"/>
</dbReference>
<dbReference type="Gene3D" id="3.10.290.10">
    <property type="entry name" value="RNA-binding S4 domain"/>
    <property type="match status" value="1"/>
</dbReference>
<dbReference type="InterPro" id="IPR020103">
    <property type="entry name" value="PsdUridine_synth_cat_dom_sf"/>
</dbReference>
<dbReference type="InterPro" id="IPR006224">
    <property type="entry name" value="PsdUridine_synth_RluA-like_CS"/>
</dbReference>
<dbReference type="InterPro" id="IPR006225">
    <property type="entry name" value="PsdUridine_synth_RluC/D"/>
</dbReference>
<dbReference type="InterPro" id="IPR006145">
    <property type="entry name" value="PsdUridine_synth_RsuA/RluA"/>
</dbReference>
<dbReference type="InterPro" id="IPR050188">
    <property type="entry name" value="RluA_PseudoU_synthase"/>
</dbReference>
<dbReference type="InterPro" id="IPR002942">
    <property type="entry name" value="S4_RNA-bd"/>
</dbReference>
<dbReference type="InterPro" id="IPR036986">
    <property type="entry name" value="S4_RNA-bd_sf"/>
</dbReference>
<dbReference type="NCBIfam" id="TIGR00005">
    <property type="entry name" value="rluA_subfam"/>
    <property type="match status" value="1"/>
</dbReference>
<dbReference type="PANTHER" id="PTHR21600">
    <property type="entry name" value="MITOCHONDRIAL RNA PSEUDOURIDINE SYNTHASE"/>
    <property type="match status" value="1"/>
</dbReference>
<dbReference type="PANTHER" id="PTHR21600:SF44">
    <property type="entry name" value="RIBOSOMAL LARGE SUBUNIT PSEUDOURIDINE SYNTHASE D"/>
    <property type="match status" value="1"/>
</dbReference>
<dbReference type="Pfam" id="PF00849">
    <property type="entry name" value="PseudoU_synth_2"/>
    <property type="match status" value="1"/>
</dbReference>
<dbReference type="SMART" id="SM00363">
    <property type="entry name" value="S4"/>
    <property type="match status" value="1"/>
</dbReference>
<dbReference type="SUPFAM" id="SSF55174">
    <property type="entry name" value="Alpha-L RNA-binding motif"/>
    <property type="match status" value="1"/>
</dbReference>
<dbReference type="SUPFAM" id="SSF55120">
    <property type="entry name" value="Pseudouridine synthase"/>
    <property type="match status" value="1"/>
</dbReference>
<dbReference type="PROSITE" id="PS01129">
    <property type="entry name" value="PSI_RLU"/>
    <property type="match status" value="1"/>
</dbReference>
<dbReference type="PROSITE" id="PS50889">
    <property type="entry name" value="S4"/>
    <property type="match status" value="1"/>
</dbReference>
<proteinExistence type="inferred from homology"/>
<protein>
    <recommendedName>
        <fullName>Uncharacterized RNA pseudouridine synthase Mb1567</fullName>
        <ecNumber>5.4.99.-</ecNumber>
    </recommendedName>
    <alternativeName>
        <fullName>RNA pseudouridylate synthase</fullName>
    </alternativeName>
    <alternativeName>
        <fullName>RNA-uridine isomerase</fullName>
    </alternativeName>
</protein>
<evidence type="ECO:0000250" key="1"/>
<evidence type="ECO:0000255" key="2">
    <source>
        <dbReference type="PROSITE-ProRule" id="PRU00182"/>
    </source>
</evidence>
<evidence type="ECO:0000305" key="3"/>
<reference key="1">
    <citation type="journal article" date="2003" name="Proc. Natl. Acad. Sci. U.S.A.">
        <title>The complete genome sequence of Mycobacterium bovis.</title>
        <authorList>
            <person name="Garnier T."/>
            <person name="Eiglmeier K."/>
            <person name="Camus J.-C."/>
            <person name="Medina N."/>
            <person name="Mansoor H."/>
            <person name="Pryor M."/>
            <person name="Duthoy S."/>
            <person name="Grondin S."/>
            <person name="Lacroix C."/>
            <person name="Monsempe C."/>
            <person name="Simon S."/>
            <person name="Harris B."/>
            <person name="Atkin R."/>
            <person name="Doggett J."/>
            <person name="Mayes R."/>
            <person name="Keating L."/>
            <person name="Wheeler P.R."/>
            <person name="Parkhill J."/>
            <person name="Barrell B.G."/>
            <person name="Cole S.T."/>
            <person name="Gordon S.V."/>
            <person name="Hewinson R.G."/>
        </authorList>
    </citation>
    <scope>NUCLEOTIDE SEQUENCE [LARGE SCALE GENOMIC DNA]</scope>
    <source>
        <strain>ATCC BAA-935 / AF2122/97</strain>
    </source>
</reference>
<reference key="2">
    <citation type="journal article" date="2017" name="Genome Announc.">
        <title>Updated reference genome sequence and annotation of Mycobacterium bovis AF2122/97.</title>
        <authorList>
            <person name="Malone K.M."/>
            <person name="Farrell D."/>
            <person name="Stuber T.P."/>
            <person name="Schubert O.T."/>
            <person name="Aebersold R."/>
            <person name="Robbe-Austerman S."/>
            <person name="Gordon S.V."/>
        </authorList>
    </citation>
    <scope>NUCLEOTIDE SEQUENCE [LARGE SCALE GENOMIC DNA]</scope>
    <scope>GENOME REANNOTATION</scope>
    <source>
        <strain>ATCC BAA-935 / AF2122/97</strain>
    </source>
</reference>
<comment type="catalytic activity">
    <reaction>
        <text>a uridine in RNA = a pseudouridine in RNA</text>
        <dbReference type="Rhea" id="RHEA:48348"/>
        <dbReference type="Rhea" id="RHEA-COMP:12068"/>
        <dbReference type="Rhea" id="RHEA-COMP:12069"/>
        <dbReference type="ChEBI" id="CHEBI:65314"/>
        <dbReference type="ChEBI" id="CHEBI:65315"/>
    </reaction>
</comment>
<comment type="similarity">
    <text evidence="3">Belongs to the pseudouridine synthase RluA family.</text>
</comment>
<organism>
    <name type="scientific">Mycobacterium bovis (strain ATCC BAA-935 / AF2122/97)</name>
    <dbReference type="NCBI Taxonomy" id="233413"/>
    <lineage>
        <taxon>Bacteria</taxon>
        <taxon>Bacillati</taxon>
        <taxon>Actinomycetota</taxon>
        <taxon>Actinomycetes</taxon>
        <taxon>Mycobacteriales</taxon>
        <taxon>Mycobacteriaceae</taxon>
        <taxon>Mycobacterium</taxon>
        <taxon>Mycobacterium tuberculosis complex</taxon>
    </lineage>
</organism>
<gene>
    <name type="ordered locus">BQ2027_MB1567</name>
</gene>
<accession>P0A5T3</accession>
<accession>A0A1R3XYM4</accession>
<accession>Q10786</accession>
<accession>X2BIN2</accession>
<feature type="chain" id="PRO_0000162744" description="Uncharacterized RNA pseudouridine synthase Mb1567">
    <location>
        <begin position="1"/>
        <end position="308"/>
    </location>
</feature>
<feature type="domain" description="S4 RNA-binding" evidence="2">
    <location>
        <begin position="15"/>
        <end position="81"/>
    </location>
</feature>
<feature type="active site" evidence="1">
    <location>
        <position position="139"/>
    </location>
</feature>
<name>Y1567_MYCBO</name>
<sequence>MADRSMPVPDGLAGMRVDTGLARLLGLSRTAAAALAEEGAVELNGVPAGKSDRLVSGALLQVRLPEAPAPLQNTPIDIEGMTILYSDDDIVAVDKPAAVAAHASVGWTGPTVLGGLAAAGYRITTSGVHERQGIVHRLDVGTSGVMVVAISERAYTVLKRAFKYRTVDKRYHALVQGHPDPSSGTIDAPIGRHRGHEWKFAITKNGRHSLTHYDTLEAFVAASLLDVHLETGRTHQIRVHFAALHHPCCGDLVYGADPKLAKRLGLDRQWLHARSLAFAHPADGRRVEIVSPYPADLQHALKILRGEG</sequence>